<gene>
    <name evidence="1" type="primary">clpS</name>
    <name type="ordered locus">Shew_1565</name>
</gene>
<organism>
    <name type="scientific">Shewanella loihica (strain ATCC BAA-1088 / PV-4)</name>
    <dbReference type="NCBI Taxonomy" id="323850"/>
    <lineage>
        <taxon>Bacteria</taxon>
        <taxon>Pseudomonadati</taxon>
        <taxon>Pseudomonadota</taxon>
        <taxon>Gammaproteobacteria</taxon>
        <taxon>Alteromonadales</taxon>
        <taxon>Shewanellaceae</taxon>
        <taxon>Shewanella</taxon>
    </lineage>
</organism>
<evidence type="ECO:0000255" key="1">
    <source>
        <dbReference type="HAMAP-Rule" id="MF_00302"/>
    </source>
</evidence>
<comment type="function">
    <text evidence="1">Involved in the modulation of the specificity of the ClpAP-mediated ATP-dependent protein degradation.</text>
</comment>
<comment type="subunit">
    <text evidence="1">Binds to the N-terminal domain of the chaperone ClpA.</text>
</comment>
<comment type="similarity">
    <text evidence="1">Belongs to the ClpS family.</text>
</comment>
<dbReference type="EMBL" id="CP000606">
    <property type="protein sequence ID" value="ABO23432.1"/>
    <property type="molecule type" value="Genomic_DNA"/>
</dbReference>
<dbReference type="RefSeq" id="WP_011865364.1">
    <property type="nucleotide sequence ID" value="NC_009092.1"/>
</dbReference>
<dbReference type="SMR" id="A3QD84"/>
<dbReference type="STRING" id="323850.Shew_1565"/>
<dbReference type="KEGG" id="slo:Shew_1565"/>
<dbReference type="eggNOG" id="COG2127">
    <property type="taxonomic scope" value="Bacteria"/>
</dbReference>
<dbReference type="HOGENOM" id="CLU_134358_2_1_6"/>
<dbReference type="OrthoDB" id="9796121at2"/>
<dbReference type="Proteomes" id="UP000001558">
    <property type="component" value="Chromosome"/>
</dbReference>
<dbReference type="GO" id="GO:0030163">
    <property type="term" value="P:protein catabolic process"/>
    <property type="evidence" value="ECO:0007669"/>
    <property type="project" value="InterPro"/>
</dbReference>
<dbReference type="GO" id="GO:0006508">
    <property type="term" value="P:proteolysis"/>
    <property type="evidence" value="ECO:0007669"/>
    <property type="project" value="UniProtKB-UniRule"/>
</dbReference>
<dbReference type="FunFam" id="3.30.1390.10:FF:000002">
    <property type="entry name" value="ATP-dependent Clp protease adapter protein ClpS"/>
    <property type="match status" value="1"/>
</dbReference>
<dbReference type="Gene3D" id="3.30.1390.10">
    <property type="match status" value="1"/>
</dbReference>
<dbReference type="HAMAP" id="MF_00302">
    <property type="entry name" value="ClpS"/>
    <property type="match status" value="1"/>
</dbReference>
<dbReference type="InterPro" id="IPR022935">
    <property type="entry name" value="ClpS"/>
</dbReference>
<dbReference type="InterPro" id="IPR003769">
    <property type="entry name" value="ClpS_core"/>
</dbReference>
<dbReference type="InterPro" id="IPR014719">
    <property type="entry name" value="Ribosomal_bL12_C/ClpS-like"/>
</dbReference>
<dbReference type="NCBIfam" id="NF000670">
    <property type="entry name" value="PRK00033.1-3"/>
    <property type="match status" value="1"/>
</dbReference>
<dbReference type="NCBIfam" id="NF000672">
    <property type="entry name" value="PRK00033.1-5"/>
    <property type="match status" value="1"/>
</dbReference>
<dbReference type="PANTHER" id="PTHR33473:SF19">
    <property type="entry name" value="ATP-DEPENDENT CLP PROTEASE ADAPTER PROTEIN CLPS"/>
    <property type="match status" value="1"/>
</dbReference>
<dbReference type="PANTHER" id="PTHR33473">
    <property type="entry name" value="ATP-DEPENDENT CLP PROTEASE ADAPTER PROTEIN CLPS1, CHLOROPLASTIC"/>
    <property type="match status" value="1"/>
</dbReference>
<dbReference type="Pfam" id="PF02617">
    <property type="entry name" value="ClpS"/>
    <property type="match status" value="1"/>
</dbReference>
<dbReference type="SUPFAM" id="SSF54736">
    <property type="entry name" value="ClpS-like"/>
    <property type="match status" value="1"/>
</dbReference>
<feature type="chain" id="PRO_1000022626" description="ATP-dependent Clp protease adapter protein ClpS">
    <location>
        <begin position="1"/>
        <end position="102"/>
    </location>
</feature>
<accession>A3QD84</accession>
<keyword id="KW-1185">Reference proteome</keyword>
<reference key="1">
    <citation type="submission" date="2007-03" db="EMBL/GenBank/DDBJ databases">
        <title>Complete sequence of Shewanella loihica PV-4.</title>
        <authorList>
            <consortium name="US DOE Joint Genome Institute"/>
            <person name="Copeland A."/>
            <person name="Lucas S."/>
            <person name="Lapidus A."/>
            <person name="Barry K."/>
            <person name="Detter J.C."/>
            <person name="Glavina del Rio T."/>
            <person name="Hammon N."/>
            <person name="Israni S."/>
            <person name="Dalin E."/>
            <person name="Tice H."/>
            <person name="Pitluck S."/>
            <person name="Chain P."/>
            <person name="Malfatti S."/>
            <person name="Shin M."/>
            <person name="Vergez L."/>
            <person name="Schmutz J."/>
            <person name="Larimer F."/>
            <person name="Land M."/>
            <person name="Hauser L."/>
            <person name="Kyrpides N."/>
            <person name="Mikhailova N."/>
            <person name="Romine M.F."/>
            <person name="Serres G."/>
            <person name="Fredrickson J."/>
            <person name="Tiedje J."/>
            <person name="Richardson P."/>
        </authorList>
    </citation>
    <scope>NUCLEOTIDE SEQUENCE [LARGE SCALE GENOMIC DNA]</scope>
    <source>
        <strain>ATCC BAA-1088 / PV-4</strain>
    </source>
</reference>
<name>CLPS_SHELP</name>
<sequence>MGKVGNIEHIEERAETELMPPSMYKVILNNDDYTPMDFVIEVLQLFFNKNEQEATDIMLAIHHQGKGICGVFPFGIAETKVAQVNQFARQNQHPLLCSLEKA</sequence>
<protein>
    <recommendedName>
        <fullName evidence="1">ATP-dependent Clp protease adapter protein ClpS</fullName>
    </recommendedName>
</protein>
<proteinExistence type="inferred from homology"/>